<feature type="chain" id="PRO_0000131220" description="Large ribosomal subunit protein uL18">
    <location>
        <begin position="1"/>
        <end position="121"/>
    </location>
</feature>
<name>RL18_BDEBA</name>
<accession>Q6MJ28</accession>
<organism>
    <name type="scientific">Bdellovibrio bacteriovorus (strain ATCC 15356 / DSM 50701 / NCIMB 9529 / HD100)</name>
    <dbReference type="NCBI Taxonomy" id="264462"/>
    <lineage>
        <taxon>Bacteria</taxon>
        <taxon>Pseudomonadati</taxon>
        <taxon>Bdellovibrionota</taxon>
        <taxon>Bdellovibrionia</taxon>
        <taxon>Bdellovibrionales</taxon>
        <taxon>Pseudobdellovibrionaceae</taxon>
        <taxon>Bdellovibrio</taxon>
    </lineage>
</organism>
<comment type="function">
    <text evidence="1">This is one of the proteins that bind and probably mediate the attachment of the 5S RNA into the large ribosomal subunit, where it forms part of the central protuberance.</text>
</comment>
<comment type="subunit">
    <text evidence="1">Part of the 50S ribosomal subunit; part of the 5S rRNA/L5/L18/L25 subcomplex. Contacts the 5S and 23S rRNAs.</text>
</comment>
<comment type="similarity">
    <text evidence="1">Belongs to the universal ribosomal protein uL18 family.</text>
</comment>
<sequence>MKLKFSKHTSERKVNRLKKKIRIRKTVKGTAERPRLCVFRSGKHVYAQIINDVDGNTLVAVSSLGKEDKSGIDMAKLVGMEAAKAATAKNIKDVVFDRNGYLYHGRVKSLADGAREGGLNF</sequence>
<protein>
    <recommendedName>
        <fullName evidence="1">Large ribosomal subunit protein uL18</fullName>
    </recommendedName>
    <alternativeName>
        <fullName evidence="2">50S ribosomal protein L18</fullName>
    </alternativeName>
</protein>
<reference key="1">
    <citation type="journal article" date="2004" name="Science">
        <title>A predator unmasked: life cycle of Bdellovibrio bacteriovorus from a genomic perspective.</title>
        <authorList>
            <person name="Rendulic S."/>
            <person name="Jagtap P."/>
            <person name="Rosinus A."/>
            <person name="Eppinger M."/>
            <person name="Baar C."/>
            <person name="Lanz C."/>
            <person name="Keller H."/>
            <person name="Lambert C."/>
            <person name="Evans K.J."/>
            <person name="Goesmann A."/>
            <person name="Meyer F."/>
            <person name="Sockett R.E."/>
            <person name="Schuster S.C."/>
        </authorList>
    </citation>
    <scope>NUCLEOTIDE SEQUENCE [LARGE SCALE GENOMIC DNA]</scope>
    <source>
        <strain>ATCC 15356 / DSM 50701 / NCIMB 9529 / HD100</strain>
    </source>
</reference>
<proteinExistence type="inferred from homology"/>
<dbReference type="EMBL" id="BX842654">
    <property type="protein sequence ID" value="CAE80734.1"/>
    <property type="molecule type" value="Genomic_DNA"/>
</dbReference>
<dbReference type="RefSeq" id="WP_011165338.1">
    <property type="nucleotide sequence ID" value="NC_005363.1"/>
</dbReference>
<dbReference type="SMR" id="Q6MJ28"/>
<dbReference type="STRING" id="264462.Bd2960"/>
<dbReference type="GeneID" id="93013824"/>
<dbReference type="KEGG" id="bba:Bd2960"/>
<dbReference type="eggNOG" id="COG0256">
    <property type="taxonomic scope" value="Bacteria"/>
</dbReference>
<dbReference type="HOGENOM" id="CLU_098841_0_1_7"/>
<dbReference type="Proteomes" id="UP000008080">
    <property type="component" value="Chromosome"/>
</dbReference>
<dbReference type="GO" id="GO:0022625">
    <property type="term" value="C:cytosolic large ribosomal subunit"/>
    <property type="evidence" value="ECO:0007669"/>
    <property type="project" value="TreeGrafter"/>
</dbReference>
<dbReference type="GO" id="GO:0008097">
    <property type="term" value="F:5S rRNA binding"/>
    <property type="evidence" value="ECO:0007669"/>
    <property type="project" value="TreeGrafter"/>
</dbReference>
<dbReference type="GO" id="GO:0003735">
    <property type="term" value="F:structural constituent of ribosome"/>
    <property type="evidence" value="ECO:0007669"/>
    <property type="project" value="InterPro"/>
</dbReference>
<dbReference type="GO" id="GO:0006412">
    <property type="term" value="P:translation"/>
    <property type="evidence" value="ECO:0007669"/>
    <property type="project" value="UniProtKB-UniRule"/>
</dbReference>
<dbReference type="CDD" id="cd00432">
    <property type="entry name" value="Ribosomal_L18_L5e"/>
    <property type="match status" value="1"/>
</dbReference>
<dbReference type="FunFam" id="3.30.420.100:FF:000001">
    <property type="entry name" value="50S ribosomal protein L18"/>
    <property type="match status" value="1"/>
</dbReference>
<dbReference type="Gene3D" id="3.30.420.100">
    <property type="match status" value="1"/>
</dbReference>
<dbReference type="HAMAP" id="MF_01337_B">
    <property type="entry name" value="Ribosomal_uL18_B"/>
    <property type="match status" value="1"/>
</dbReference>
<dbReference type="InterPro" id="IPR004389">
    <property type="entry name" value="Ribosomal_uL18_bac-type"/>
</dbReference>
<dbReference type="InterPro" id="IPR005484">
    <property type="entry name" value="Ribosomal_uL18_bac/euk"/>
</dbReference>
<dbReference type="NCBIfam" id="TIGR00060">
    <property type="entry name" value="L18_bact"/>
    <property type="match status" value="1"/>
</dbReference>
<dbReference type="PANTHER" id="PTHR12899">
    <property type="entry name" value="39S RIBOSOMAL PROTEIN L18, MITOCHONDRIAL"/>
    <property type="match status" value="1"/>
</dbReference>
<dbReference type="PANTHER" id="PTHR12899:SF3">
    <property type="entry name" value="LARGE RIBOSOMAL SUBUNIT PROTEIN UL18M"/>
    <property type="match status" value="1"/>
</dbReference>
<dbReference type="Pfam" id="PF00861">
    <property type="entry name" value="Ribosomal_L18p"/>
    <property type="match status" value="1"/>
</dbReference>
<dbReference type="SUPFAM" id="SSF53137">
    <property type="entry name" value="Translational machinery components"/>
    <property type="match status" value="1"/>
</dbReference>
<gene>
    <name evidence="1" type="primary">rplR</name>
    <name type="ordered locus">Bd2960</name>
</gene>
<keyword id="KW-1185">Reference proteome</keyword>
<keyword id="KW-0687">Ribonucleoprotein</keyword>
<keyword id="KW-0689">Ribosomal protein</keyword>
<keyword id="KW-0694">RNA-binding</keyword>
<keyword id="KW-0699">rRNA-binding</keyword>
<evidence type="ECO:0000255" key="1">
    <source>
        <dbReference type="HAMAP-Rule" id="MF_01337"/>
    </source>
</evidence>
<evidence type="ECO:0000305" key="2"/>